<organism>
    <name type="scientific">Neisseria gonorrhoeae (strain NCCP11945)</name>
    <dbReference type="NCBI Taxonomy" id="521006"/>
    <lineage>
        <taxon>Bacteria</taxon>
        <taxon>Pseudomonadati</taxon>
        <taxon>Pseudomonadota</taxon>
        <taxon>Betaproteobacteria</taxon>
        <taxon>Neisseriales</taxon>
        <taxon>Neisseriaceae</taxon>
        <taxon>Neisseria</taxon>
    </lineage>
</organism>
<name>ACPS_NEIG2</name>
<proteinExistence type="inferred from homology"/>
<keyword id="KW-0963">Cytoplasm</keyword>
<keyword id="KW-0275">Fatty acid biosynthesis</keyword>
<keyword id="KW-0276">Fatty acid metabolism</keyword>
<keyword id="KW-0444">Lipid biosynthesis</keyword>
<keyword id="KW-0443">Lipid metabolism</keyword>
<keyword id="KW-0460">Magnesium</keyword>
<keyword id="KW-0479">Metal-binding</keyword>
<keyword id="KW-0808">Transferase</keyword>
<reference key="1">
    <citation type="journal article" date="2008" name="J. Bacteriol.">
        <title>Complete genome sequence of Neisseria gonorrhoeae NCCP11945.</title>
        <authorList>
            <person name="Chung G.T."/>
            <person name="Yoo J.S."/>
            <person name="Oh H.B."/>
            <person name="Lee Y.S."/>
            <person name="Cha S.H."/>
            <person name="Kim S.J."/>
            <person name="Yoo C.K."/>
        </authorList>
    </citation>
    <scope>NUCLEOTIDE SEQUENCE [LARGE SCALE GENOMIC DNA]</scope>
    <source>
        <strain>NCCP11945</strain>
    </source>
</reference>
<sequence length="125" mass="13509">MIYGIGTDIVSLKRIIRLNKKFGQAFAGRILTPEELLEFPQAGKPVNYLAKRFAAKEAFAKAVGTGIRGAVSFCNIGIGHDALGKPEFFYGPALSEWLEEQGISRVSLSMADEGDTVLAFAVAEK</sequence>
<gene>
    <name evidence="1" type="primary">acpS</name>
    <name type="ordered locus">NGK_1789</name>
</gene>
<feature type="chain" id="PRO_1000093899" description="Holo-[acyl-carrier-protein] synthase">
    <location>
        <begin position="1"/>
        <end position="125"/>
    </location>
</feature>
<feature type="binding site" evidence="1">
    <location>
        <position position="8"/>
    </location>
    <ligand>
        <name>Mg(2+)</name>
        <dbReference type="ChEBI" id="CHEBI:18420"/>
    </ligand>
</feature>
<feature type="binding site" evidence="1">
    <location>
        <position position="57"/>
    </location>
    <ligand>
        <name>Mg(2+)</name>
        <dbReference type="ChEBI" id="CHEBI:18420"/>
    </ligand>
</feature>
<comment type="function">
    <text evidence="1">Transfers the 4'-phosphopantetheine moiety from coenzyme A to a Ser of acyl-carrier-protein.</text>
</comment>
<comment type="catalytic activity">
    <reaction evidence="1">
        <text>apo-[ACP] + CoA = holo-[ACP] + adenosine 3',5'-bisphosphate + H(+)</text>
        <dbReference type="Rhea" id="RHEA:12068"/>
        <dbReference type="Rhea" id="RHEA-COMP:9685"/>
        <dbReference type="Rhea" id="RHEA-COMP:9690"/>
        <dbReference type="ChEBI" id="CHEBI:15378"/>
        <dbReference type="ChEBI" id="CHEBI:29999"/>
        <dbReference type="ChEBI" id="CHEBI:57287"/>
        <dbReference type="ChEBI" id="CHEBI:58343"/>
        <dbReference type="ChEBI" id="CHEBI:64479"/>
        <dbReference type="EC" id="2.7.8.7"/>
    </reaction>
</comment>
<comment type="cofactor">
    <cofactor evidence="1">
        <name>Mg(2+)</name>
        <dbReference type="ChEBI" id="CHEBI:18420"/>
    </cofactor>
</comment>
<comment type="subcellular location">
    <subcellularLocation>
        <location evidence="1">Cytoplasm</location>
    </subcellularLocation>
</comment>
<comment type="similarity">
    <text evidence="1">Belongs to the P-Pant transferase superfamily. AcpS family.</text>
</comment>
<accession>B4RQ92</accession>
<evidence type="ECO:0000255" key="1">
    <source>
        <dbReference type="HAMAP-Rule" id="MF_00101"/>
    </source>
</evidence>
<protein>
    <recommendedName>
        <fullName evidence="1">Holo-[acyl-carrier-protein] synthase</fullName>
        <shortName evidence="1">Holo-ACP synthase</shortName>
        <ecNumber evidence="1">2.7.8.7</ecNumber>
    </recommendedName>
    <alternativeName>
        <fullName evidence="1">4'-phosphopantetheinyl transferase AcpS</fullName>
    </alternativeName>
</protein>
<dbReference type="EC" id="2.7.8.7" evidence="1"/>
<dbReference type="EMBL" id="CP001050">
    <property type="protein sequence ID" value="ACF30430.1"/>
    <property type="molecule type" value="Genomic_DNA"/>
</dbReference>
<dbReference type="RefSeq" id="WP_003695557.1">
    <property type="nucleotide sequence ID" value="NC_011035.1"/>
</dbReference>
<dbReference type="SMR" id="B4RQ92"/>
<dbReference type="GeneID" id="66753707"/>
<dbReference type="KEGG" id="ngk:NGK_1789"/>
<dbReference type="HOGENOM" id="CLU_089696_3_1_4"/>
<dbReference type="Proteomes" id="UP000002564">
    <property type="component" value="Chromosome"/>
</dbReference>
<dbReference type="GO" id="GO:0005737">
    <property type="term" value="C:cytoplasm"/>
    <property type="evidence" value="ECO:0007669"/>
    <property type="project" value="UniProtKB-SubCell"/>
</dbReference>
<dbReference type="GO" id="GO:0008897">
    <property type="term" value="F:holo-[acyl-carrier-protein] synthase activity"/>
    <property type="evidence" value="ECO:0007669"/>
    <property type="project" value="UniProtKB-UniRule"/>
</dbReference>
<dbReference type="GO" id="GO:0000287">
    <property type="term" value="F:magnesium ion binding"/>
    <property type="evidence" value="ECO:0007669"/>
    <property type="project" value="UniProtKB-UniRule"/>
</dbReference>
<dbReference type="GO" id="GO:0006633">
    <property type="term" value="P:fatty acid biosynthetic process"/>
    <property type="evidence" value="ECO:0007669"/>
    <property type="project" value="UniProtKB-UniRule"/>
</dbReference>
<dbReference type="Gene3D" id="3.90.470.20">
    <property type="entry name" value="4'-phosphopantetheinyl transferase domain"/>
    <property type="match status" value="1"/>
</dbReference>
<dbReference type="HAMAP" id="MF_00101">
    <property type="entry name" value="AcpS"/>
    <property type="match status" value="1"/>
</dbReference>
<dbReference type="InterPro" id="IPR008278">
    <property type="entry name" value="4-PPantetheinyl_Trfase_dom"/>
</dbReference>
<dbReference type="InterPro" id="IPR037143">
    <property type="entry name" value="4-PPantetheinyl_Trfase_dom_sf"/>
</dbReference>
<dbReference type="InterPro" id="IPR002582">
    <property type="entry name" value="ACPS"/>
</dbReference>
<dbReference type="InterPro" id="IPR004568">
    <property type="entry name" value="Ppantetheine-prot_Trfase_dom"/>
</dbReference>
<dbReference type="NCBIfam" id="TIGR00516">
    <property type="entry name" value="acpS"/>
    <property type="match status" value="1"/>
</dbReference>
<dbReference type="NCBIfam" id="TIGR00556">
    <property type="entry name" value="pantethn_trn"/>
    <property type="match status" value="1"/>
</dbReference>
<dbReference type="Pfam" id="PF01648">
    <property type="entry name" value="ACPS"/>
    <property type="match status" value="1"/>
</dbReference>
<dbReference type="SUPFAM" id="SSF56214">
    <property type="entry name" value="4'-phosphopantetheinyl transferase"/>
    <property type="match status" value="1"/>
</dbReference>